<proteinExistence type="evidence at transcript level"/>
<dbReference type="EMBL" id="AJ720281">
    <property type="protein sequence ID" value="CAG31940.1"/>
    <property type="molecule type" value="mRNA"/>
</dbReference>
<dbReference type="RefSeq" id="NP_001006179.1">
    <property type="nucleotide sequence ID" value="NM_001006179.1"/>
</dbReference>
<dbReference type="RefSeq" id="XP_015138962.1">
    <property type="nucleotide sequence ID" value="XM_015283476.1"/>
</dbReference>
<dbReference type="RefSeq" id="XP_015138963.1">
    <property type="nucleotide sequence ID" value="XM_015283477.1"/>
</dbReference>
<dbReference type="SMR" id="Q5ZK03"/>
<dbReference type="BioGRID" id="678193">
    <property type="interactions" value="1"/>
</dbReference>
<dbReference type="FunCoup" id="Q5ZK03">
    <property type="interactions" value="2785"/>
</dbReference>
<dbReference type="STRING" id="9031.ENSGALP00000014280"/>
<dbReference type="PaxDb" id="9031-ENSGALP00000014280"/>
<dbReference type="Ensembl" id="ENSGALT00010044955.1">
    <property type="protein sequence ID" value="ENSGALP00010026848.1"/>
    <property type="gene ID" value="ENSGALG00010018573.1"/>
</dbReference>
<dbReference type="GeneID" id="416724"/>
<dbReference type="KEGG" id="gga:416724"/>
<dbReference type="CTD" id="10483"/>
<dbReference type="VEuPathDB" id="HostDB:geneid_416724"/>
<dbReference type="eggNOG" id="KOG1986">
    <property type="taxonomic scope" value="Eukaryota"/>
</dbReference>
<dbReference type="GeneTree" id="ENSGT00390000006916"/>
<dbReference type="HOGENOM" id="CLU_008658_3_0_1"/>
<dbReference type="InParanoid" id="Q5ZK03"/>
<dbReference type="OMA" id="MPWNIIP"/>
<dbReference type="OrthoDB" id="10256289at2759"/>
<dbReference type="PhylomeDB" id="Q5ZK03"/>
<dbReference type="TreeFam" id="TF300693"/>
<dbReference type="PRO" id="PR:Q5ZK03"/>
<dbReference type="Proteomes" id="UP000000539">
    <property type="component" value="Chromosome 3"/>
</dbReference>
<dbReference type="Bgee" id="ENSGALG00000008793">
    <property type="expression patterns" value="Expressed in spleen and 13 other cell types or tissues"/>
</dbReference>
<dbReference type="GO" id="GO:0030127">
    <property type="term" value="C:COPII vesicle coat"/>
    <property type="evidence" value="ECO:0000250"/>
    <property type="project" value="UniProtKB"/>
</dbReference>
<dbReference type="GO" id="GO:0005829">
    <property type="term" value="C:cytosol"/>
    <property type="evidence" value="ECO:0000250"/>
    <property type="project" value="UniProtKB"/>
</dbReference>
<dbReference type="GO" id="GO:0070971">
    <property type="term" value="C:endoplasmic reticulum exit site"/>
    <property type="evidence" value="ECO:0000250"/>
    <property type="project" value="UniProtKB"/>
</dbReference>
<dbReference type="GO" id="GO:0005789">
    <property type="term" value="C:endoplasmic reticulum membrane"/>
    <property type="evidence" value="ECO:0007669"/>
    <property type="project" value="UniProtKB-SubCell"/>
</dbReference>
<dbReference type="GO" id="GO:0048471">
    <property type="term" value="C:perinuclear region of cytoplasm"/>
    <property type="evidence" value="ECO:0007669"/>
    <property type="project" value="Ensembl"/>
</dbReference>
<dbReference type="GO" id="GO:0005096">
    <property type="term" value="F:GTPase activator activity"/>
    <property type="evidence" value="ECO:0000318"/>
    <property type="project" value="GO_Central"/>
</dbReference>
<dbReference type="GO" id="GO:0008270">
    <property type="term" value="F:zinc ion binding"/>
    <property type="evidence" value="ECO:0000250"/>
    <property type="project" value="UniProtKB"/>
</dbReference>
<dbReference type="GO" id="GO:0090110">
    <property type="term" value="P:COPII-coated vesicle cargo loading"/>
    <property type="evidence" value="ECO:0000250"/>
    <property type="project" value="UniProtKB"/>
</dbReference>
<dbReference type="GO" id="GO:0006886">
    <property type="term" value="P:intracellular protein transport"/>
    <property type="evidence" value="ECO:0007669"/>
    <property type="project" value="InterPro"/>
</dbReference>
<dbReference type="CDD" id="cd01478">
    <property type="entry name" value="Sec23-like"/>
    <property type="match status" value="1"/>
</dbReference>
<dbReference type="CDD" id="cd11287">
    <property type="entry name" value="Sec23_C"/>
    <property type="match status" value="1"/>
</dbReference>
<dbReference type="FunFam" id="1.20.120.730:FF:000003">
    <property type="entry name" value="Protein transport protein SEC23"/>
    <property type="match status" value="1"/>
</dbReference>
<dbReference type="FunFam" id="2.30.30.380:FF:000001">
    <property type="entry name" value="Protein transport protein SEC23"/>
    <property type="match status" value="1"/>
</dbReference>
<dbReference type="FunFam" id="2.60.40.1670:FF:000006">
    <property type="entry name" value="Protein transport protein SEC23"/>
    <property type="match status" value="1"/>
</dbReference>
<dbReference type="FunFam" id="3.40.20.10:FF:000003">
    <property type="entry name" value="Protein transport protein SEC23"/>
    <property type="match status" value="1"/>
</dbReference>
<dbReference type="FunFam" id="3.40.50.410:FF:000011">
    <property type="entry name" value="Protein transport protein SEC23"/>
    <property type="match status" value="1"/>
</dbReference>
<dbReference type="Gene3D" id="2.60.40.1670">
    <property type="entry name" value="beta-sandwich domain of Sec23/24"/>
    <property type="match status" value="1"/>
</dbReference>
<dbReference type="Gene3D" id="1.20.120.730">
    <property type="entry name" value="Sec23/Sec24 helical domain"/>
    <property type="match status" value="1"/>
</dbReference>
<dbReference type="Gene3D" id="3.40.20.10">
    <property type="entry name" value="Severin"/>
    <property type="match status" value="1"/>
</dbReference>
<dbReference type="Gene3D" id="3.40.50.410">
    <property type="entry name" value="von Willebrand factor, type A domain"/>
    <property type="match status" value="1"/>
</dbReference>
<dbReference type="Gene3D" id="2.30.30.380">
    <property type="entry name" value="Zn-finger domain of Sec23/24"/>
    <property type="match status" value="1"/>
</dbReference>
<dbReference type="InterPro" id="IPR029006">
    <property type="entry name" value="ADF-H/Gelsolin-like_dom_sf"/>
</dbReference>
<dbReference type="InterPro" id="IPR007123">
    <property type="entry name" value="Gelsolin-like_dom"/>
</dbReference>
<dbReference type="InterPro" id="IPR036180">
    <property type="entry name" value="Gelsolin-like_dom_sf"/>
</dbReference>
<dbReference type="InterPro" id="IPR037364">
    <property type="entry name" value="Sec23"/>
</dbReference>
<dbReference type="InterPro" id="IPR006900">
    <property type="entry name" value="Sec23/24_helical_dom"/>
</dbReference>
<dbReference type="InterPro" id="IPR036175">
    <property type="entry name" value="Sec23/24_helical_dom_sf"/>
</dbReference>
<dbReference type="InterPro" id="IPR006896">
    <property type="entry name" value="Sec23/24_trunk_dom"/>
</dbReference>
<dbReference type="InterPro" id="IPR012990">
    <property type="entry name" value="Sec23_24_beta_S"/>
</dbReference>
<dbReference type="InterPro" id="IPR037550">
    <property type="entry name" value="Sec23_C"/>
</dbReference>
<dbReference type="InterPro" id="IPR036465">
    <property type="entry name" value="vWFA_dom_sf"/>
</dbReference>
<dbReference type="InterPro" id="IPR006895">
    <property type="entry name" value="Znf_Sec23_Sec24"/>
</dbReference>
<dbReference type="InterPro" id="IPR036174">
    <property type="entry name" value="Znf_Sec23_Sec24_sf"/>
</dbReference>
<dbReference type="PANTHER" id="PTHR11141">
    <property type="entry name" value="PROTEIN TRANSPORT PROTEIN SEC23"/>
    <property type="match status" value="1"/>
</dbReference>
<dbReference type="PANTHER" id="PTHR11141:SF10">
    <property type="entry name" value="PROTEIN TRANSPORT PROTEIN SEC23B"/>
    <property type="match status" value="1"/>
</dbReference>
<dbReference type="Pfam" id="PF00626">
    <property type="entry name" value="Gelsolin"/>
    <property type="match status" value="1"/>
</dbReference>
<dbReference type="Pfam" id="PF08033">
    <property type="entry name" value="Sec23_BS"/>
    <property type="match status" value="1"/>
</dbReference>
<dbReference type="Pfam" id="PF04815">
    <property type="entry name" value="Sec23_helical"/>
    <property type="match status" value="1"/>
</dbReference>
<dbReference type="Pfam" id="PF04811">
    <property type="entry name" value="Sec23_trunk"/>
    <property type="match status" value="1"/>
</dbReference>
<dbReference type="Pfam" id="PF04810">
    <property type="entry name" value="zf-Sec23_Sec24"/>
    <property type="match status" value="1"/>
</dbReference>
<dbReference type="SUPFAM" id="SSF81995">
    <property type="entry name" value="beta-sandwich domain of Sec23/24"/>
    <property type="match status" value="1"/>
</dbReference>
<dbReference type="SUPFAM" id="SSF82754">
    <property type="entry name" value="C-terminal, gelsolin-like domain of Sec23/24"/>
    <property type="match status" value="1"/>
</dbReference>
<dbReference type="SUPFAM" id="SSF81811">
    <property type="entry name" value="Helical domain of Sec23/24"/>
    <property type="match status" value="1"/>
</dbReference>
<dbReference type="SUPFAM" id="SSF53300">
    <property type="entry name" value="vWA-like"/>
    <property type="match status" value="1"/>
</dbReference>
<dbReference type="SUPFAM" id="SSF82919">
    <property type="entry name" value="Zn-finger domain of Sec23/24"/>
    <property type="match status" value="1"/>
</dbReference>
<accession>Q5ZK03</accession>
<name>SC23A_CHICK</name>
<comment type="function">
    <text evidence="1">Component of the coat protein complex II (COPII) which promotes the formation of transport vesicles from the endoplasmic reticulum (ER). The coat has two main functions, the physical deformation of the endoplasmic reticulum membrane into vesicles and the selection of cargo molecules for their transport to the Golgi complex.</text>
</comment>
<comment type="subunit">
    <text evidence="1">COPII is composed of at least five proteins: the Sec23/24 complex, the Sec13/31 complex and Sar1.</text>
</comment>
<comment type="subcellular location">
    <subcellularLocation>
        <location evidence="1">Cytoplasmic vesicle</location>
        <location evidence="1">COPII-coated vesicle membrane</location>
        <topology evidence="1">Peripheral membrane protein</topology>
        <orientation evidence="1">Cytoplasmic side</orientation>
    </subcellularLocation>
    <subcellularLocation>
        <location evidence="1">Endoplasmic reticulum membrane</location>
        <topology evidence="1">Peripheral membrane protein</topology>
        <orientation evidence="1">Cytoplasmic side</orientation>
    </subcellularLocation>
    <subcellularLocation>
        <location evidence="1">Cytoplasm</location>
        <location evidence="1">Cytosol</location>
    </subcellularLocation>
    <text evidence="1">Enriched at endoplasmic reticulum exit sites (ERES), also known as transitional endoplasmic reticulum (tER).</text>
</comment>
<comment type="domain">
    <text evidence="1">The Gelsolin-like repeat mediates interaction with proteins containing PPP motifs.</text>
</comment>
<comment type="similarity">
    <text evidence="3">Belongs to the SEC23/SEC24 family. SEC23 subfamily.</text>
</comment>
<feature type="chain" id="PRO_0000318933" description="Protein transport protein Sec23A">
    <location>
        <begin position="1"/>
        <end position="767"/>
    </location>
</feature>
<feature type="repeat" description="Gelsolin-like" evidence="2">
    <location>
        <begin position="634"/>
        <end position="720"/>
    </location>
</feature>
<feature type="binding site" evidence="1">
    <location>
        <position position="61"/>
    </location>
    <ligand>
        <name>Zn(2+)</name>
        <dbReference type="ChEBI" id="CHEBI:29105"/>
    </ligand>
</feature>
<feature type="binding site" evidence="1">
    <location>
        <position position="66"/>
    </location>
    <ligand>
        <name>Zn(2+)</name>
        <dbReference type="ChEBI" id="CHEBI:29105"/>
    </ligand>
</feature>
<feature type="binding site" evidence="1">
    <location>
        <position position="85"/>
    </location>
    <ligand>
        <name>Zn(2+)</name>
        <dbReference type="ChEBI" id="CHEBI:29105"/>
    </ligand>
</feature>
<feature type="binding site" evidence="1">
    <location>
        <position position="88"/>
    </location>
    <ligand>
        <name>Zn(2+)</name>
        <dbReference type="ChEBI" id="CHEBI:29105"/>
    </ligand>
</feature>
<sequence length="767" mass="86304">MATYLEFIQQNEERDGVRFSWNVWPSSRLEATRMVVPLACLLTPLRERPDLPPVQYEPVLCSRPTCKAVLNPLCQVDYRAKLWACNFCFQRNQFPPAYAGISEVNQPAELMPQFSTIEYIVQRGPQTPLIFLYVVDTCLEEEDLQALKESLQMSLSLLPADALVGLITFGRMIQVHELSCEGISKSYVFRGTKDLTAKQIQDMLGLSRPAVPIQQGRPLQAPEQPVISSRFLQPVHKIDMNLTDLLGELQRDPWPVTQGKRPLRSTGVALSIAVGLLEGTFPNTGARIMLFTGGPPTQGPGMVVGDELKTPIRSWHDIEKDNARFMKKATKHYETLANRTATNGHCIDIYACALDQTGLLEMKCCANLTGGHMVMGDSFNTSLFKQTFQRVFNKGLNGEFRMAFGANLEVKTSRELKIAGAIGPCVSLNVKGPCVSENELGIGGTSQWKICGLDPCTTLAIYFEVVNQHNAPIPQGGRGAVQFVTQYQHSSTQKRIRVTTIARNWADAQSQLQHIEAAFDQEAAAVLMARLGVYRAESEEGPDVLRWLDRQLIRLCQKFGQYNKDDPNSFRLSESFSLYPQFMFHLRRSPFLQVFNNSPDESSYYRHHFARQDLTQSLIMIQPILYAYSFHGPPEPVLLDSSSILPDRILLMDTFFQIVIYLGETIAQWQKAGYQDMPEYENFKHLLQAPLDDAQEILQTRFPMPRYVHTEHGGSQARFLLSKVNPSQTHNNLYAWGQESGAPILTDDVSLQVFMDHLKKLAVSSAA</sequence>
<keyword id="KW-0963">Cytoplasm</keyword>
<keyword id="KW-0968">Cytoplasmic vesicle</keyword>
<keyword id="KW-0256">Endoplasmic reticulum</keyword>
<keyword id="KW-0931">ER-Golgi transport</keyword>
<keyword id="KW-0472">Membrane</keyword>
<keyword id="KW-0479">Metal-binding</keyword>
<keyword id="KW-0653">Protein transport</keyword>
<keyword id="KW-1185">Reference proteome</keyword>
<keyword id="KW-0813">Transport</keyword>
<keyword id="KW-0862">Zinc</keyword>
<organism>
    <name type="scientific">Gallus gallus</name>
    <name type="common">Chicken</name>
    <dbReference type="NCBI Taxonomy" id="9031"/>
    <lineage>
        <taxon>Eukaryota</taxon>
        <taxon>Metazoa</taxon>
        <taxon>Chordata</taxon>
        <taxon>Craniata</taxon>
        <taxon>Vertebrata</taxon>
        <taxon>Euteleostomi</taxon>
        <taxon>Archelosauria</taxon>
        <taxon>Archosauria</taxon>
        <taxon>Dinosauria</taxon>
        <taxon>Saurischia</taxon>
        <taxon>Theropoda</taxon>
        <taxon>Coelurosauria</taxon>
        <taxon>Aves</taxon>
        <taxon>Neognathae</taxon>
        <taxon>Galloanserae</taxon>
        <taxon>Galliformes</taxon>
        <taxon>Phasianidae</taxon>
        <taxon>Phasianinae</taxon>
        <taxon>Gallus</taxon>
    </lineage>
</organism>
<evidence type="ECO:0000250" key="1">
    <source>
        <dbReference type="UniProtKB" id="Q15436"/>
    </source>
</evidence>
<evidence type="ECO:0000255" key="2"/>
<evidence type="ECO:0000305" key="3"/>
<evidence type="ECO:0000312" key="4">
    <source>
        <dbReference type="EMBL" id="CAG31940.1"/>
    </source>
</evidence>
<protein>
    <recommendedName>
        <fullName evidence="3">Protein transport protein Sec23A</fullName>
    </recommendedName>
    <alternativeName>
        <fullName>SEC23-related protein A</fullName>
    </alternativeName>
</protein>
<reference key="1">
    <citation type="journal article" date="2005" name="Genome Biol.">
        <title>Full-length cDNAs from chicken bursal lymphocytes to facilitate gene function analysis.</title>
        <authorList>
            <person name="Caldwell R.B."/>
            <person name="Kierzek A.M."/>
            <person name="Arakawa H."/>
            <person name="Bezzubov Y."/>
            <person name="Zaim J."/>
            <person name="Fiedler P."/>
            <person name="Kutter S."/>
            <person name="Blagodatski A."/>
            <person name="Kostovska D."/>
            <person name="Koter M."/>
            <person name="Plachy J."/>
            <person name="Carninci P."/>
            <person name="Hayashizaki Y."/>
            <person name="Buerstedde J.-M."/>
        </authorList>
    </citation>
    <scope>NUCLEOTIDE SEQUENCE [LARGE SCALE MRNA]</scope>
    <source>
        <strain>CB</strain>
        <tissue>Bursa of Fabricius</tissue>
    </source>
</reference>
<gene>
    <name evidence="1" type="primary">SEC23A</name>
    <name evidence="4" type="ORF">RCJMB04_14a13</name>
</gene>